<comment type="similarity">
    <text evidence="2">Belongs to the NTE family.</text>
</comment>
<protein>
    <recommendedName>
        <fullName>Uncharacterized NTE family protein YlbK</fullName>
    </recommendedName>
</protein>
<keyword id="KW-0378">Hydrolase</keyword>
<keyword id="KW-0442">Lipid degradation</keyword>
<keyword id="KW-0443">Lipid metabolism</keyword>
<keyword id="KW-1185">Reference proteome</keyword>
<name>YLBK_BACSU</name>
<dbReference type="EMBL" id="Z98682">
    <property type="protein sequence ID" value="CAB11357.1"/>
    <property type="molecule type" value="Genomic_DNA"/>
</dbReference>
<dbReference type="EMBL" id="AL009126">
    <property type="protein sequence ID" value="CAB13377.1"/>
    <property type="molecule type" value="Genomic_DNA"/>
</dbReference>
<dbReference type="PIR" id="H69874">
    <property type="entry name" value="H69874"/>
</dbReference>
<dbReference type="RefSeq" id="NP_389387.1">
    <property type="nucleotide sequence ID" value="NC_000964.3"/>
</dbReference>
<dbReference type="RefSeq" id="WP_003232221.1">
    <property type="nucleotide sequence ID" value="NZ_OZ025638.1"/>
</dbReference>
<dbReference type="SMR" id="O34731"/>
<dbReference type="FunCoup" id="O34731">
    <property type="interactions" value="56"/>
</dbReference>
<dbReference type="STRING" id="224308.BSU15040"/>
<dbReference type="PaxDb" id="224308-BSU15040"/>
<dbReference type="DNASU" id="936382"/>
<dbReference type="EnsemblBacteria" id="CAB13377">
    <property type="protein sequence ID" value="CAB13377"/>
    <property type="gene ID" value="BSU_15040"/>
</dbReference>
<dbReference type="GeneID" id="936382"/>
<dbReference type="KEGG" id="bsu:BSU15040"/>
<dbReference type="PATRIC" id="fig|224308.179.peg.1639"/>
<dbReference type="eggNOG" id="COG1752">
    <property type="taxonomic scope" value="Bacteria"/>
</dbReference>
<dbReference type="InParanoid" id="O34731"/>
<dbReference type="OrthoDB" id="9770965at2"/>
<dbReference type="PhylomeDB" id="O34731"/>
<dbReference type="BioCyc" id="BSUB:BSU15040-MONOMER"/>
<dbReference type="Proteomes" id="UP000001570">
    <property type="component" value="Chromosome"/>
</dbReference>
<dbReference type="GO" id="GO:0004622">
    <property type="term" value="F:lysophospholipase activity"/>
    <property type="evidence" value="ECO:0007669"/>
    <property type="project" value="InterPro"/>
</dbReference>
<dbReference type="GO" id="GO:0016042">
    <property type="term" value="P:lipid catabolic process"/>
    <property type="evidence" value="ECO:0007669"/>
    <property type="project" value="UniProtKB-KW"/>
</dbReference>
<dbReference type="GO" id="GO:0046470">
    <property type="term" value="P:phosphatidylcholine metabolic process"/>
    <property type="evidence" value="ECO:0007669"/>
    <property type="project" value="InterPro"/>
</dbReference>
<dbReference type="CDD" id="cd07228">
    <property type="entry name" value="Pat_NTE_like_bacteria"/>
    <property type="match status" value="1"/>
</dbReference>
<dbReference type="Gene3D" id="3.40.1090.10">
    <property type="entry name" value="Cytosolic phospholipase A2 catalytic domain"/>
    <property type="match status" value="2"/>
</dbReference>
<dbReference type="InterPro" id="IPR016035">
    <property type="entry name" value="Acyl_Trfase/lysoPLipase"/>
</dbReference>
<dbReference type="InterPro" id="IPR001423">
    <property type="entry name" value="LysoPLipase_patatin_CS"/>
</dbReference>
<dbReference type="InterPro" id="IPR050301">
    <property type="entry name" value="NTE"/>
</dbReference>
<dbReference type="InterPro" id="IPR002641">
    <property type="entry name" value="PNPLA_dom"/>
</dbReference>
<dbReference type="PANTHER" id="PTHR14226">
    <property type="entry name" value="NEUROPATHY TARGET ESTERASE/SWISS CHEESE D.MELANOGASTER"/>
    <property type="match status" value="1"/>
</dbReference>
<dbReference type="PANTHER" id="PTHR14226:SF76">
    <property type="entry name" value="NTE FAMILY PROTEIN RSSA"/>
    <property type="match status" value="1"/>
</dbReference>
<dbReference type="Pfam" id="PF01734">
    <property type="entry name" value="Patatin"/>
    <property type="match status" value="1"/>
</dbReference>
<dbReference type="SUPFAM" id="SSF52151">
    <property type="entry name" value="FabD/lysophospholipase-like"/>
    <property type="match status" value="1"/>
</dbReference>
<dbReference type="PROSITE" id="PS51635">
    <property type="entry name" value="PNPLA"/>
    <property type="match status" value="1"/>
</dbReference>
<dbReference type="PROSITE" id="PS01237">
    <property type="entry name" value="UPF0028"/>
    <property type="match status" value="1"/>
</dbReference>
<evidence type="ECO:0000255" key="1">
    <source>
        <dbReference type="PROSITE-ProRule" id="PRU01161"/>
    </source>
</evidence>
<evidence type="ECO:0000305" key="2"/>
<sequence>MAKPKIGLALGSGGARGLAHLGVLSSLHKHQIEVDMIAGSSMGALVGSFYAAGHDVATMKKVAKAFKRRLYADYTVPKLGFLKGDRVRQLVHAYTFGKPIEELQIPLGIVACDLQTGEKIVFRKGSVSDAVRASISIPGIFIPQRLDGRLLVDGAVVDRIPVSVVKDMGADIIIASDVSRVRKTETAVHIFDVIMQSMDILQNELVRHQTIAADIMIRPSLETYSSSSFANIEEMISAGEEATNRMISKIRKEIENWEGS</sequence>
<accession>O34731</accession>
<organism>
    <name type="scientific">Bacillus subtilis (strain 168)</name>
    <dbReference type="NCBI Taxonomy" id="224308"/>
    <lineage>
        <taxon>Bacteria</taxon>
        <taxon>Bacillati</taxon>
        <taxon>Bacillota</taxon>
        <taxon>Bacilli</taxon>
        <taxon>Bacillales</taxon>
        <taxon>Bacillaceae</taxon>
        <taxon>Bacillus</taxon>
    </lineage>
</organism>
<reference key="1">
    <citation type="submission" date="1997-08" db="EMBL/GenBank/DDBJ databases">
        <title>Bacillus subtilis chromosomal region downstream nprE.</title>
        <authorList>
            <person name="Bertero M."/>
            <person name="Presecan E."/>
            <person name="Glaser P."/>
            <person name="Richou A."/>
            <person name="Danchin A."/>
        </authorList>
    </citation>
    <scope>NUCLEOTIDE SEQUENCE [GENOMIC DNA]</scope>
    <source>
        <strain>168</strain>
    </source>
</reference>
<reference key="2">
    <citation type="journal article" date="1997" name="Nature">
        <title>The complete genome sequence of the Gram-positive bacterium Bacillus subtilis.</title>
        <authorList>
            <person name="Kunst F."/>
            <person name="Ogasawara N."/>
            <person name="Moszer I."/>
            <person name="Albertini A.M."/>
            <person name="Alloni G."/>
            <person name="Azevedo V."/>
            <person name="Bertero M.G."/>
            <person name="Bessieres P."/>
            <person name="Bolotin A."/>
            <person name="Borchert S."/>
            <person name="Borriss R."/>
            <person name="Boursier L."/>
            <person name="Brans A."/>
            <person name="Braun M."/>
            <person name="Brignell S.C."/>
            <person name="Bron S."/>
            <person name="Brouillet S."/>
            <person name="Bruschi C.V."/>
            <person name="Caldwell B."/>
            <person name="Capuano V."/>
            <person name="Carter N.M."/>
            <person name="Choi S.-K."/>
            <person name="Codani J.-J."/>
            <person name="Connerton I.F."/>
            <person name="Cummings N.J."/>
            <person name="Daniel R.A."/>
            <person name="Denizot F."/>
            <person name="Devine K.M."/>
            <person name="Duesterhoeft A."/>
            <person name="Ehrlich S.D."/>
            <person name="Emmerson P.T."/>
            <person name="Entian K.-D."/>
            <person name="Errington J."/>
            <person name="Fabret C."/>
            <person name="Ferrari E."/>
            <person name="Foulger D."/>
            <person name="Fritz C."/>
            <person name="Fujita M."/>
            <person name="Fujita Y."/>
            <person name="Fuma S."/>
            <person name="Galizzi A."/>
            <person name="Galleron N."/>
            <person name="Ghim S.-Y."/>
            <person name="Glaser P."/>
            <person name="Goffeau A."/>
            <person name="Golightly E.J."/>
            <person name="Grandi G."/>
            <person name="Guiseppi G."/>
            <person name="Guy B.J."/>
            <person name="Haga K."/>
            <person name="Haiech J."/>
            <person name="Harwood C.R."/>
            <person name="Henaut A."/>
            <person name="Hilbert H."/>
            <person name="Holsappel S."/>
            <person name="Hosono S."/>
            <person name="Hullo M.-F."/>
            <person name="Itaya M."/>
            <person name="Jones L.-M."/>
            <person name="Joris B."/>
            <person name="Karamata D."/>
            <person name="Kasahara Y."/>
            <person name="Klaerr-Blanchard M."/>
            <person name="Klein C."/>
            <person name="Kobayashi Y."/>
            <person name="Koetter P."/>
            <person name="Koningstein G."/>
            <person name="Krogh S."/>
            <person name="Kumano M."/>
            <person name="Kurita K."/>
            <person name="Lapidus A."/>
            <person name="Lardinois S."/>
            <person name="Lauber J."/>
            <person name="Lazarevic V."/>
            <person name="Lee S.-M."/>
            <person name="Levine A."/>
            <person name="Liu H."/>
            <person name="Masuda S."/>
            <person name="Mauel C."/>
            <person name="Medigue C."/>
            <person name="Medina N."/>
            <person name="Mellado R.P."/>
            <person name="Mizuno M."/>
            <person name="Moestl D."/>
            <person name="Nakai S."/>
            <person name="Noback M."/>
            <person name="Noone D."/>
            <person name="O'Reilly M."/>
            <person name="Ogawa K."/>
            <person name="Ogiwara A."/>
            <person name="Oudega B."/>
            <person name="Park S.-H."/>
            <person name="Parro V."/>
            <person name="Pohl T.M."/>
            <person name="Portetelle D."/>
            <person name="Porwollik S."/>
            <person name="Prescott A.M."/>
            <person name="Presecan E."/>
            <person name="Pujic P."/>
            <person name="Purnelle B."/>
            <person name="Rapoport G."/>
            <person name="Rey M."/>
            <person name="Reynolds S."/>
            <person name="Rieger M."/>
            <person name="Rivolta C."/>
            <person name="Rocha E."/>
            <person name="Roche B."/>
            <person name="Rose M."/>
            <person name="Sadaie Y."/>
            <person name="Sato T."/>
            <person name="Scanlan E."/>
            <person name="Schleich S."/>
            <person name="Schroeter R."/>
            <person name="Scoffone F."/>
            <person name="Sekiguchi J."/>
            <person name="Sekowska A."/>
            <person name="Seror S.J."/>
            <person name="Serror P."/>
            <person name="Shin B.-S."/>
            <person name="Soldo B."/>
            <person name="Sorokin A."/>
            <person name="Tacconi E."/>
            <person name="Takagi T."/>
            <person name="Takahashi H."/>
            <person name="Takemaru K."/>
            <person name="Takeuchi M."/>
            <person name="Tamakoshi A."/>
            <person name="Tanaka T."/>
            <person name="Terpstra P."/>
            <person name="Tognoni A."/>
            <person name="Tosato V."/>
            <person name="Uchiyama S."/>
            <person name="Vandenbol M."/>
            <person name="Vannier F."/>
            <person name="Vassarotti A."/>
            <person name="Viari A."/>
            <person name="Wambutt R."/>
            <person name="Wedler E."/>
            <person name="Wedler H."/>
            <person name="Weitzenegger T."/>
            <person name="Winters P."/>
            <person name="Wipat A."/>
            <person name="Yamamoto H."/>
            <person name="Yamane K."/>
            <person name="Yasumoto K."/>
            <person name="Yata K."/>
            <person name="Yoshida K."/>
            <person name="Yoshikawa H.-F."/>
            <person name="Zumstein E."/>
            <person name="Yoshikawa H."/>
            <person name="Danchin A."/>
        </authorList>
    </citation>
    <scope>NUCLEOTIDE SEQUENCE [LARGE SCALE GENOMIC DNA]</scope>
    <source>
        <strain>168</strain>
    </source>
</reference>
<feature type="chain" id="PRO_0000172533" description="Uncharacterized NTE family protein YlbK">
    <location>
        <begin position="1"/>
        <end position="260"/>
    </location>
</feature>
<feature type="domain" description="PNPLA" evidence="1">
    <location>
        <begin position="8"/>
        <end position="166"/>
    </location>
</feature>
<feature type="short sequence motif" description="GXSXG" evidence="1">
    <location>
        <begin position="39"/>
        <end position="43"/>
    </location>
</feature>
<feature type="short sequence motif" description="DGA/G" evidence="1">
    <location>
        <begin position="153"/>
        <end position="155"/>
    </location>
</feature>
<feature type="active site" description="Nucleophile" evidence="1">
    <location>
        <position position="41"/>
    </location>
</feature>
<feature type="active site" description="Proton acceptor" evidence="1">
    <location>
        <position position="153"/>
    </location>
</feature>
<proteinExistence type="inferred from homology"/>
<gene>
    <name type="primary">ylbK</name>
    <name type="ordered locus">BSU15040</name>
</gene>